<proteinExistence type="inferred from homology"/>
<organism>
    <name type="scientific">Staphylococcus aureus (strain bovine RF122 / ET3-1)</name>
    <dbReference type="NCBI Taxonomy" id="273036"/>
    <lineage>
        <taxon>Bacteria</taxon>
        <taxon>Bacillati</taxon>
        <taxon>Bacillota</taxon>
        <taxon>Bacilli</taxon>
        <taxon>Bacillales</taxon>
        <taxon>Staphylococcaceae</taxon>
        <taxon>Staphylococcus</taxon>
    </lineage>
</organism>
<protein>
    <recommendedName>
        <fullName evidence="1">Ribosomal RNA large subunit methyltransferase H</fullName>
        <ecNumber evidence="1">2.1.1.177</ecNumber>
    </recommendedName>
    <alternativeName>
        <fullName evidence="1">23S rRNA (pseudouridine1915-N3)-methyltransferase</fullName>
    </alternativeName>
    <alternativeName>
        <fullName evidence="1">23S rRNA m3Psi1915 methyltransferase</fullName>
    </alternativeName>
    <alternativeName>
        <fullName evidence="1">rRNA (pseudouridine-N3-)-methyltransferase RlmH</fullName>
    </alternativeName>
</protein>
<evidence type="ECO:0000255" key="1">
    <source>
        <dbReference type="HAMAP-Rule" id="MF_00658"/>
    </source>
</evidence>
<sequence length="159" mass="18306">MKITILAVGKLKEKYWKQAIAEYEKRLGPYTKIDIIEVPDEKAPENMSDKEIEQVKEKEGQRILAKIKPQSTVITLEIQGKMLSSEGLAQELNQRMTQGQSDFVFVIGGSNGLHKDVLQRSNYALSFSKMTFPHQMMRVVLIEQVYRAFKIMRGEAYHK</sequence>
<name>RLMH_STAAB</name>
<keyword id="KW-0963">Cytoplasm</keyword>
<keyword id="KW-0489">Methyltransferase</keyword>
<keyword id="KW-0698">rRNA processing</keyword>
<keyword id="KW-0949">S-adenosyl-L-methionine</keyword>
<keyword id="KW-0808">Transferase</keyword>
<accession>Q2YUP7</accession>
<comment type="function">
    <text evidence="1">Specifically methylates the pseudouridine at position 1915 (m3Psi1915) in 23S rRNA.</text>
</comment>
<comment type="catalytic activity">
    <reaction evidence="1">
        <text>pseudouridine(1915) in 23S rRNA + S-adenosyl-L-methionine = N(3)-methylpseudouridine(1915) in 23S rRNA + S-adenosyl-L-homocysteine + H(+)</text>
        <dbReference type="Rhea" id="RHEA:42752"/>
        <dbReference type="Rhea" id="RHEA-COMP:10221"/>
        <dbReference type="Rhea" id="RHEA-COMP:10222"/>
        <dbReference type="ChEBI" id="CHEBI:15378"/>
        <dbReference type="ChEBI" id="CHEBI:57856"/>
        <dbReference type="ChEBI" id="CHEBI:59789"/>
        <dbReference type="ChEBI" id="CHEBI:65314"/>
        <dbReference type="ChEBI" id="CHEBI:74486"/>
        <dbReference type="EC" id="2.1.1.177"/>
    </reaction>
</comment>
<comment type="subunit">
    <text evidence="1">Homodimer.</text>
</comment>
<comment type="subcellular location">
    <subcellularLocation>
        <location evidence="1">Cytoplasm</location>
    </subcellularLocation>
</comment>
<comment type="similarity">
    <text evidence="1">Belongs to the RNA methyltransferase RlmH family.</text>
</comment>
<reference key="1">
    <citation type="journal article" date="2007" name="PLoS ONE">
        <title>Molecular correlates of host specialization in Staphylococcus aureus.</title>
        <authorList>
            <person name="Herron-Olson L."/>
            <person name="Fitzgerald J.R."/>
            <person name="Musser J.M."/>
            <person name="Kapur V."/>
        </authorList>
    </citation>
    <scope>NUCLEOTIDE SEQUENCE [LARGE SCALE GENOMIC DNA]</scope>
    <source>
        <strain>bovine RF122 / ET3-1</strain>
    </source>
</reference>
<dbReference type="EC" id="2.1.1.177" evidence="1"/>
<dbReference type="EMBL" id="AJ938182">
    <property type="protein sequence ID" value="CAI79712.1"/>
    <property type="molecule type" value="Genomic_DNA"/>
</dbReference>
<dbReference type="RefSeq" id="WP_000704775.1">
    <property type="nucleotide sequence ID" value="NC_007622.1"/>
</dbReference>
<dbReference type="SMR" id="Q2YUP7"/>
<dbReference type="GeneID" id="98344407"/>
<dbReference type="KEGG" id="sab:SAB0024"/>
<dbReference type="HOGENOM" id="CLU_100552_0_0_9"/>
<dbReference type="GO" id="GO:0005737">
    <property type="term" value="C:cytoplasm"/>
    <property type="evidence" value="ECO:0007669"/>
    <property type="project" value="UniProtKB-SubCell"/>
</dbReference>
<dbReference type="GO" id="GO:0070038">
    <property type="term" value="F:rRNA (pseudouridine-N3-)-methyltransferase activity"/>
    <property type="evidence" value="ECO:0007669"/>
    <property type="project" value="UniProtKB-UniRule"/>
</dbReference>
<dbReference type="CDD" id="cd18081">
    <property type="entry name" value="RlmH-like"/>
    <property type="match status" value="1"/>
</dbReference>
<dbReference type="Gene3D" id="3.40.1280.10">
    <property type="match status" value="1"/>
</dbReference>
<dbReference type="HAMAP" id="MF_00658">
    <property type="entry name" value="23SrRNA_methyltr_H"/>
    <property type="match status" value="1"/>
</dbReference>
<dbReference type="InterPro" id="IPR029028">
    <property type="entry name" value="Alpha/beta_knot_MTases"/>
</dbReference>
<dbReference type="InterPro" id="IPR003742">
    <property type="entry name" value="RlmH-like"/>
</dbReference>
<dbReference type="InterPro" id="IPR029026">
    <property type="entry name" value="tRNA_m1G_MTases_N"/>
</dbReference>
<dbReference type="NCBIfam" id="NF000985">
    <property type="entry name" value="PRK00103.1-3"/>
    <property type="match status" value="1"/>
</dbReference>
<dbReference type="NCBIfam" id="NF000986">
    <property type="entry name" value="PRK00103.1-4"/>
    <property type="match status" value="1"/>
</dbReference>
<dbReference type="NCBIfam" id="TIGR00246">
    <property type="entry name" value="tRNA_RlmH_YbeA"/>
    <property type="match status" value="1"/>
</dbReference>
<dbReference type="PANTHER" id="PTHR33603">
    <property type="entry name" value="METHYLTRANSFERASE"/>
    <property type="match status" value="1"/>
</dbReference>
<dbReference type="PANTHER" id="PTHR33603:SF1">
    <property type="entry name" value="RIBOSOMAL RNA LARGE SUBUNIT METHYLTRANSFERASE H"/>
    <property type="match status" value="1"/>
</dbReference>
<dbReference type="Pfam" id="PF02590">
    <property type="entry name" value="SPOUT_MTase"/>
    <property type="match status" value="1"/>
</dbReference>
<dbReference type="PIRSF" id="PIRSF004505">
    <property type="entry name" value="MT_bac"/>
    <property type="match status" value="1"/>
</dbReference>
<dbReference type="SUPFAM" id="SSF75217">
    <property type="entry name" value="alpha/beta knot"/>
    <property type="match status" value="1"/>
</dbReference>
<feature type="chain" id="PRO_0000260614" description="Ribosomal RNA large subunit methyltransferase H">
    <location>
        <begin position="1"/>
        <end position="159"/>
    </location>
</feature>
<feature type="binding site" evidence="1">
    <location>
        <position position="76"/>
    </location>
    <ligand>
        <name>S-adenosyl-L-methionine</name>
        <dbReference type="ChEBI" id="CHEBI:59789"/>
    </ligand>
</feature>
<feature type="binding site" evidence="1">
    <location>
        <position position="108"/>
    </location>
    <ligand>
        <name>S-adenosyl-L-methionine</name>
        <dbReference type="ChEBI" id="CHEBI:59789"/>
    </ligand>
</feature>
<feature type="binding site" evidence="1">
    <location>
        <begin position="127"/>
        <end position="132"/>
    </location>
    <ligand>
        <name>S-adenosyl-L-methionine</name>
        <dbReference type="ChEBI" id="CHEBI:59789"/>
    </ligand>
</feature>
<gene>
    <name evidence="1" type="primary">rlmH</name>
    <name type="ordered locus">SAB0024</name>
</gene>